<comment type="function">
    <text evidence="1">Releases the supercoiling and torsional tension of DNA, which is introduced during the DNA replication and transcription, by transiently cleaving and rejoining one strand of the DNA duplex. Introduces a single-strand break via transesterification at a target site in duplex DNA. The scissile phosphodiester is attacked by the catalytic tyrosine of the enzyme, resulting in the formation of a DNA-(5'-phosphotyrosyl)-enzyme intermediate and the expulsion of a 3'-OH DNA strand. The free DNA strand then undergoes passage around the unbroken strand, thus removing DNA supercoils. Finally, in the religation step, the DNA 3'-OH attacks the covalent intermediate to expel the active-site tyrosine and restore the DNA phosphodiester backbone.</text>
</comment>
<comment type="catalytic activity">
    <reaction evidence="1">
        <text>ATP-independent breakage of single-stranded DNA, followed by passage and rejoining.</text>
        <dbReference type="EC" id="5.6.2.1"/>
    </reaction>
</comment>
<comment type="cofactor">
    <cofactor evidence="1">
        <name>Mg(2+)</name>
        <dbReference type="ChEBI" id="CHEBI:18420"/>
    </cofactor>
</comment>
<comment type="subunit">
    <text evidence="1">Monomer.</text>
</comment>
<comment type="similarity">
    <text evidence="1">Belongs to the type IA topoisomerase family.</text>
</comment>
<name>TOP1_PYRHO</name>
<dbReference type="EC" id="5.6.2.1" evidence="1"/>
<dbReference type="EMBL" id="BA000001">
    <property type="protein sequence ID" value="BAA29711.1"/>
    <property type="molecule type" value="Genomic_DNA"/>
</dbReference>
<dbReference type="PIR" id="E71106">
    <property type="entry name" value="E71106"/>
</dbReference>
<dbReference type="RefSeq" id="WP_010884720.1">
    <property type="nucleotide sequence ID" value="NC_000961.1"/>
</dbReference>
<dbReference type="SMR" id="O58356"/>
<dbReference type="STRING" id="70601.gene:9377564"/>
<dbReference type="EnsemblBacteria" id="BAA29711">
    <property type="protein sequence ID" value="BAA29711"/>
    <property type="gene ID" value="BAA29711"/>
</dbReference>
<dbReference type="GeneID" id="1442954"/>
<dbReference type="KEGG" id="pho:PH0622"/>
<dbReference type="eggNOG" id="arCOG01527">
    <property type="taxonomic scope" value="Archaea"/>
</dbReference>
<dbReference type="OrthoDB" id="30963at2157"/>
<dbReference type="Proteomes" id="UP000000752">
    <property type="component" value="Chromosome"/>
</dbReference>
<dbReference type="GO" id="GO:0005694">
    <property type="term" value="C:chromosome"/>
    <property type="evidence" value="ECO:0007669"/>
    <property type="project" value="InterPro"/>
</dbReference>
<dbReference type="GO" id="GO:0003677">
    <property type="term" value="F:DNA binding"/>
    <property type="evidence" value="ECO:0007669"/>
    <property type="project" value="UniProtKB-KW"/>
</dbReference>
<dbReference type="GO" id="GO:0003917">
    <property type="term" value="F:DNA topoisomerase type I (single strand cut, ATP-independent) activity"/>
    <property type="evidence" value="ECO:0007669"/>
    <property type="project" value="UniProtKB-UniRule"/>
</dbReference>
<dbReference type="GO" id="GO:0008270">
    <property type="term" value="F:zinc ion binding"/>
    <property type="evidence" value="ECO:0007669"/>
    <property type="project" value="UniProtKB-KW"/>
</dbReference>
<dbReference type="GO" id="GO:0006310">
    <property type="term" value="P:DNA recombination"/>
    <property type="evidence" value="ECO:0007669"/>
    <property type="project" value="TreeGrafter"/>
</dbReference>
<dbReference type="GO" id="GO:0006281">
    <property type="term" value="P:DNA repair"/>
    <property type="evidence" value="ECO:0007669"/>
    <property type="project" value="TreeGrafter"/>
</dbReference>
<dbReference type="GO" id="GO:0006265">
    <property type="term" value="P:DNA topological change"/>
    <property type="evidence" value="ECO:0007669"/>
    <property type="project" value="UniProtKB-UniRule"/>
</dbReference>
<dbReference type="CDD" id="cd00186">
    <property type="entry name" value="TOP1Ac"/>
    <property type="match status" value="1"/>
</dbReference>
<dbReference type="CDD" id="cd03362">
    <property type="entry name" value="TOPRIM_TopoIA_TopoIII"/>
    <property type="match status" value="1"/>
</dbReference>
<dbReference type="FunFam" id="1.10.290.10:FF:000003">
    <property type="entry name" value="DNA topoisomerase"/>
    <property type="match status" value="1"/>
</dbReference>
<dbReference type="FunFam" id="1.10.460.10:FF:000018">
    <property type="entry name" value="DNA topoisomerase 1"/>
    <property type="match status" value="1"/>
</dbReference>
<dbReference type="Gene3D" id="3.40.50.140">
    <property type="match status" value="1"/>
</dbReference>
<dbReference type="Gene3D" id="3.30.65.10">
    <property type="entry name" value="Bacterial Topoisomerase I, domain 1"/>
    <property type="match status" value="1"/>
</dbReference>
<dbReference type="Gene3D" id="1.10.460.10">
    <property type="entry name" value="Topoisomerase I, domain 2"/>
    <property type="match status" value="1"/>
</dbReference>
<dbReference type="Gene3D" id="2.70.20.10">
    <property type="entry name" value="Topoisomerase I, domain 3"/>
    <property type="match status" value="1"/>
</dbReference>
<dbReference type="Gene3D" id="1.10.290.10">
    <property type="entry name" value="Topoisomerase I, domain 4"/>
    <property type="match status" value="1"/>
</dbReference>
<dbReference type="HAMAP" id="MF_00952">
    <property type="entry name" value="Topoisom_1_prok"/>
    <property type="match status" value="1"/>
</dbReference>
<dbReference type="InterPro" id="IPR000380">
    <property type="entry name" value="Topo_IA"/>
</dbReference>
<dbReference type="InterPro" id="IPR003601">
    <property type="entry name" value="Topo_IA_2"/>
</dbReference>
<dbReference type="InterPro" id="IPR023406">
    <property type="entry name" value="Topo_IA_AS"/>
</dbReference>
<dbReference type="InterPro" id="IPR013497">
    <property type="entry name" value="Topo_IA_cen"/>
</dbReference>
<dbReference type="InterPro" id="IPR013824">
    <property type="entry name" value="Topo_IA_cen_sub1"/>
</dbReference>
<dbReference type="InterPro" id="IPR013825">
    <property type="entry name" value="Topo_IA_cen_sub2"/>
</dbReference>
<dbReference type="InterPro" id="IPR013826">
    <property type="entry name" value="Topo_IA_cen_sub3"/>
</dbReference>
<dbReference type="InterPro" id="IPR023405">
    <property type="entry name" value="Topo_IA_core_domain"/>
</dbReference>
<dbReference type="InterPro" id="IPR003602">
    <property type="entry name" value="Topo_IA_DNA-bd_dom"/>
</dbReference>
<dbReference type="InterPro" id="IPR013498">
    <property type="entry name" value="Topo_IA_Znf"/>
</dbReference>
<dbReference type="InterPro" id="IPR005739">
    <property type="entry name" value="TopoI_arch"/>
</dbReference>
<dbReference type="InterPro" id="IPR028612">
    <property type="entry name" value="Topoisom_1_IA"/>
</dbReference>
<dbReference type="InterPro" id="IPR006171">
    <property type="entry name" value="TOPRIM_dom"/>
</dbReference>
<dbReference type="InterPro" id="IPR034144">
    <property type="entry name" value="TOPRIM_TopoIII"/>
</dbReference>
<dbReference type="NCBIfam" id="NF004438">
    <property type="entry name" value="PRK05776.1"/>
    <property type="match status" value="1"/>
</dbReference>
<dbReference type="NCBIfam" id="TIGR01057">
    <property type="entry name" value="topA_arch"/>
    <property type="match status" value="1"/>
</dbReference>
<dbReference type="PANTHER" id="PTHR11390:SF26">
    <property type="entry name" value="DNA TOPOISOMERASE 1"/>
    <property type="match status" value="1"/>
</dbReference>
<dbReference type="PANTHER" id="PTHR11390">
    <property type="entry name" value="PROKARYOTIC DNA TOPOISOMERASE"/>
    <property type="match status" value="1"/>
</dbReference>
<dbReference type="Pfam" id="PF01131">
    <property type="entry name" value="Topoisom_bac"/>
    <property type="match status" value="1"/>
</dbReference>
<dbReference type="Pfam" id="PF01751">
    <property type="entry name" value="Toprim"/>
    <property type="match status" value="1"/>
</dbReference>
<dbReference type="Pfam" id="PF01396">
    <property type="entry name" value="Zn_ribbon_Top1"/>
    <property type="match status" value="1"/>
</dbReference>
<dbReference type="PRINTS" id="PR00417">
    <property type="entry name" value="PRTPISMRASEI"/>
</dbReference>
<dbReference type="SMART" id="SM00437">
    <property type="entry name" value="TOP1Ac"/>
    <property type="match status" value="1"/>
</dbReference>
<dbReference type="SMART" id="SM00436">
    <property type="entry name" value="TOP1Bc"/>
    <property type="match status" value="1"/>
</dbReference>
<dbReference type="SMART" id="SM00493">
    <property type="entry name" value="TOPRIM"/>
    <property type="match status" value="1"/>
</dbReference>
<dbReference type="SUPFAM" id="SSF56712">
    <property type="entry name" value="Prokaryotic type I DNA topoisomerase"/>
    <property type="match status" value="1"/>
</dbReference>
<dbReference type="PROSITE" id="PS00396">
    <property type="entry name" value="TOPO_IA_1"/>
    <property type="match status" value="1"/>
</dbReference>
<dbReference type="PROSITE" id="PS52039">
    <property type="entry name" value="TOPO_IA_2"/>
    <property type="match status" value="1"/>
</dbReference>
<dbReference type="PROSITE" id="PS50880">
    <property type="entry name" value="TOPRIM"/>
    <property type="match status" value="1"/>
</dbReference>
<sequence>MILIIAEKPNVARKIAGALSERRPIKKSLFGVPYYEIFREGKKLIVASAVGHLYGLAPKRDVFGYPIFDIEWVPVYIAEKGKEYAREYIKALSVLAKRVREFIVACDYDTEGEVIGYTALKYACGVDPRVAKRMKFSALTKRDLLNAWRNLEPTINFGMANAGIARHILDWYWGVNLSRALTHAIKKASGKWVVLSTGRVQGPTLKFLVEREREIQSFVPRPYWVIKLIFEKNGQKFTANYEKDKIWEEEEGKRIVLEVKKSIPRVSNVEIKRQKRTPPHPFDLGTLQREAYSAFGFSPKKTLDIAQSLYEKGFSSYPRTESQKLPRNINFRMIIQNLAKMPQYRPYAHILLGLPELKPVEGKKEDPAHPAIYPTGEIPRPGDLTKDEEKLYDMIVRRFLAVFMEPAIRESVKVTIRAGPHKFFLSGGRTVKKGWLSVYGKYVKFEEVTLPEFFIGERIKVIQVKREKKKTKPPARYSPAAVIKKMEDLGLGTKATRAQILETLYQRGYIEGKKSIKVTPLGMKVIETLEKYVPEIISVELTREFEKKMELIMEGRLTKEEVIEEAKERLTKILEEFKKRELEIGIELAKIVVGEDEVKPLVVGKCPKCGGDLIVKYNKKTGKRFVGCSNWPKCDVTYPILQRGEIIPTNKTCCNGAPVVIIREEDGREFEICLDINCKDWKAKSH</sequence>
<feature type="chain" id="PRO_0000145181" description="DNA topoisomerase 1">
    <location>
        <begin position="1"/>
        <end position="686"/>
    </location>
</feature>
<feature type="domain" description="Toprim" evidence="1">
    <location>
        <begin position="1"/>
        <end position="141"/>
    </location>
</feature>
<feature type="domain" description="Topo IA-type catalytic" evidence="2">
    <location>
        <begin position="156"/>
        <end position="574"/>
    </location>
</feature>
<feature type="zinc finger region" description="C4-type 1">
    <location>
        <begin position="606"/>
        <end position="634"/>
    </location>
</feature>
<feature type="zinc finger region" description="C4-type 2; atypical">
    <location>
        <begin position="653"/>
        <end position="678"/>
    </location>
</feature>
<feature type="region of interest" description="Interaction with DNA" evidence="1">
    <location>
        <begin position="196"/>
        <end position="201"/>
    </location>
</feature>
<feature type="active site" description="O-(5'-phospho-DNA)-tyrosine intermediate" evidence="2">
    <location>
        <position position="317"/>
    </location>
</feature>
<feature type="binding site" evidence="1">
    <location>
        <position position="7"/>
    </location>
    <ligand>
        <name>Mg(2+)</name>
        <dbReference type="ChEBI" id="CHEBI:18420"/>
        <note>catalytic</note>
    </ligand>
</feature>
<feature type="binding site" evidence="1">
    <location>
        <position position="107"/>
    </location>
    <ligand>
        <name>Mg(2+)</name>
        <dbReference type="ChEBI" id="CHEBI:18420"/>
        <note>catalytic</note>
    </ligand>
</feature>
<feature type="site" description="Interaction with DNA" evidence="1">
    <location>
        <position position="52"/>
    </location>
</feature>
<feature type="site" description="Interaction with DNA" evidence="1">
    <location>
        <position position="166"/>
    </location>
</feature>
<feature type="site" description="Interaction with DNA" evidence="1">
    <location>
        <position position="170"/>
    </location>
</feature>
<feature type="site" description="Interaction with DNA" evidence="1">
    <location>
        <position position="319"/>
    </location>
</feature>
<feature type="site" description="Interaction with DNA" evidence="1">
    <location>
        <position position="507"/>
    </location>
</feature>
<protein>
    <recommendedName>
        <fullName evidence="1">DNA topoisomerase 1</fullName>
        <ecNumber evidence="1">5.6.2.1</ecNumber>
    </recommendedName>
    <alternativeName>
        <fullName evidence="1">DNA topoisomerase I</fullName>
    </alternativeName>
    <alternativeName>
        <fullName>Omega-protein</fullName>
    </alternativeName>
    <alternativeName>
        <fullName>Relaxing enzyme</fullName>
    </alternativeName>
    <alternativeName>
        <fullName>Swivelase</fullName>
    </alternativeName>
    <alternativeName>
        <fullName>Untwisting enzyme</fullName>
    </alternativeName>
</protein>
<gene>
    <name evidence="1" type="primary">topA</name>
    <name type="ordered locus">PH0622</name>
</gene>
<reference key="1">
    <citation type="journal article" date="1998" name="DNA Res.">
        <title>Complete sequence and gene organization of the genome of a hyper-thermophilic archaebacterium, Pyrococcus horikoshii OT3.</title>
        <authorList>
            <person name="Kawarabayasi Y."/>
            <person name="Sawada M."/>
            <person name="Horikawa H."/>
            <person name="Haikawa Y."/>
            <person name="Hino Y."/>
            <person name="Yamamoto S."/>
            <person name="Sekine M."/>
            <person name="Baba S."/>
            <person name="Kosugi H."/>
            <person name="Hosoyama A."/>
            <person name="Nagai Y."/>
            <person name="Sakai M."/>
            <person name="Ogura K."/>
            <person name="Otsuka R."/>
            <person name="Nakazawa H."/>
            <person name="Takamiya M."/>
            <person name="Ohfuku Y."/>
            <person name="Funahashi T."/>
            <person name="Tanaka T."/>
            <person name="Kudoh Y."/>
            <person name="Yamazaki J."/>
            <person name="Kushida N."/>
            <person name="Oguchi A."/>
            <person name="Aoki K."/>
            <person name="Yoshizawa T."/>
            <person name="Nakamura Y."/>
            <person name="Robb F.T."/>
            <person name="Horikoshi K."/>
            <person name="Masuchi Y."/>
            <person name="Shizuya H."/>
            <person name="Kikuchi H."/>
        </authorList>
    </citation>
    <scope>NUCLEOTIDE SEQUENCE [LARGE SCALE GENOMIC DNA]</scope>
    <source>
        <strain>ATCC 700860 / DSM 12428 / JCM 9974 / NBRC 100139 / OT-3</strain>
    </source>
</reference>
<evidence type="ECO:0000255" key="1">
    <source>
        <dbReference type="HAMAP-Rule" id="MF_00952"/>
    </source>
</evidence>
<evidence type="ECO:0000255" key="2">
    <source>
        <dbReference type="PROSITE-ProRule" id="PRU01383"/>
    </source>
</evidence>
<keyword id="KW-0238">DNA-binding</keyword>
<keyword id="KW-0413">Isomerase</keyword>
<keyword id="KW-0460">Magnesium</keyword>
<keyword id="KW-0479">Metal-binding</keyword>
<keyword id="KW-0677">Repeat</keyword>
<keyword id="KW-0799">Topoisomerase</keyword>
<keyword id="KW-0862">Zinc</keyword>
<keyword id="KW-0863">Zinc-finger</keyword>
<proteinExistence type="inferred from homology"/>
<organism>
    <name type="scientific">Pyrococcus horikoshii (strain ATCC 700860 / DSM 12428 / JCM 9974 / NBRC 100139 / OT-3)</name>
    <dbReference type="NCBI Taxonomy" id="70601"/>
    <lineage>
        <taxon>Archaea</taxon>
        <taxon>Methanobacteriati</taxon>
        <taxon>Methanobacteriota</taxon>
        <taxon>Thermococci</taxon>
        <taxon>Thermococcales</taxon>
        <taxon>Thermococcaceae</taxon>
        <taxon>Pyrococcus</taxon>
    </lineage>
</organism>
<accession>O58356</accession>